<proteinExistence type="evidence at protein level"/>
<accession>P85723</accession>
<feature type="peptide" id="PRO_0000378762" description="Periviscerokinin-1" evidence="2">
    <location>
        <begin position="1"/>
        <end position="11"/>
    </location>
</feature>
<feature type="modified residue" description="Threonine amide" evidence="2">
    <location>
        <position position="11"/>
    </location>
</feature>
<protein>
    <recommendedName>
        <fullName evidence="3">Periviscerokinin-1</fullName>
        <shortName evidence="3">PerSc-PVK-1</shortName>
    </recommendedName>
</protein>
<keyword id="KW-0027">Amidation</keyword>
<keyword id="KW-0903">Direct protein sequencing</keyword>
<keyword id="KW-0527">Neuropeptide</keyword>
<keyword id="KW-0964">Secreted</keyword>
<organism>
    <name type="scientific">Perisphaeria cf. scabrella (strain SR-2005)</name>
    <name type="common">Cockroach</name>
    <dbReference type="NCBI Taxonomy" id="348759"/>
    <lineage>
        <taxon>Eukaryota</taxon>
        <taxon>Metazoa</taxon>
        <taxon>Ecdysozoa</taxon>
        <taxon>Arthropoda</taxon>
        <taxon>Hexapoda</taxon>
        <taxon>Insecta</taxon>
        <taxon>Pterygota</taxon>
        <taxon>Neoptera</taxon>
        <taxon>Polyneoptera</taxon>
        <taxon>Dictyoptera</taxon>
        <taxon>Blattodea</taxon>
        <taxon>Blaberoidea</taxon>
        <taxon>Blaberidae</taxon>
        <taxon>Perisphaerinae</taxon>
        <taxon>Perisphaeria</taxon>
    </lineage>
</organism>
<reference evidence="4" key="1">
    <citation type="journal article" date="2009" name="BMC Evol. Biol.">
        <title>A proteomic approach for studying insect phylogeny: CAPA peptides of ancient insect taxa (Dictyoptera, Blattoptera) as a test case.</title>
        <authorList>
            <person name="Roth S."/>
            <person name="Fromm B."/>
            <person name="Gaede G."/>
            <person name="Predel R."/>
        </authorList>
    </citation>
    <scope>PROTEIN SEQUENCE</scope>
    <scope>AMIDATION AT THR-11</scope>
    <source>
        <tissue evidence="2">Abdominal perisympathetic organs</tissue>
    </source>
</reference>
<sequence>GSTGLIPFGRT</sequence>
<evidence type="ECO:0000255" key="1"/>
<evidence type="ECO:0000269" key="2">
    <source>
    </source>
</evidence>
<evidence type="ECO:0000303" key="3">
    <source>
    </source>
</evidence>
<evidence type="ECO:0000305" key="4"/>
<comment type="function">
    <text evidence="4">Mediates visceral muscle contractile activity (myotropic activity).</text>
</comment>
<comment type="subcellular location">
    <subcellularLocation>
        <location evidence="4">Secreted</location>
    </subcellularLocation>
</comment>
<comment type="similarity">
    <text evidence="1">Belongs to the periviscerokinin family.</text>
</comment>
<name>PVK1_PERSS</name>
<dbReference type="GO" id="GO:0005576">
    <property type="term" value="C:extracellular region"/>
    <property type="evidence" value="ECO:0007669"/>
    <property type="project" value="UniProtKB-SubCell"/>
</dbReference>
<dbReference type="GO" id="GO:0007218">
    <property type="term" value="P:neuropeptide signaling pathway"/>
    <property type="evidence" value="ECO:0007669"/>
    <property type="project" value="UniProtKB-KW"/>
</dbReference>
<dbReference type="InterPro" id="IPR013231">
    <property type="entry name" value="Periviscerokinin"/>
</dbReference>
<dbReference type="Pfam" id="PF08259">
    <property type="entry name" value="Periviscerokin"/>
    <property type="match status" value="1"/>
</dbReference>